<protein>
    <recommendedName>
        <fullName>Single-strand selective monofunctional uracil-DNA glycosylase</fullName>
        <ecNumber>3.2.2.-</ecNumber>
    </recommendedName>
</protein>
<gene>
    <name type="primary">Smug1</name>
</gene>
<reference key="1">
    <citation type="journal article" date="2003" name="Biochemistry">
        <title>Mammalian 5-formyluracil-DNA glycosylase. 2. Role of SMUG1 uracil-DNA glycosylase in repair of 5-formyluracil and other oxidized and deaminated base lesions.</title>
        <authorList>
            <person name="Masaoka A."/>
            <person name="Matsubara M."/>
            <person name="Hasegawa R."/>
            <person name="Tanaka T."/>
            <person name="Kurisu S."/>
            <person name="Terato H."/>
            <person name="Ohyama Y."/>
            <person name="Karino N."/>
            <person name="Matsuda A."/>
            <person name="Ide H."/>
        </authorList>
    </citation>
    <scope>NUCLEOTIDE SEQUENCE [MRNA]</scope>
    <scope>FUNCTION</scope>
    <source>
        <strain>Wistar</strain>
        <tissue>Kidney</tissue>
    </source>
</reference>
<dbReference type="EC" id="3.2.2.-"/>
<dbReference type="EMBL" id="AY191521">
    <property type="protein sequence ID" value="AAO38671.1"/>
    <property type="molecule type" value="mRNA"/>
</dbReference>
<dbReference type="RefSeq" id="NP_808795.1">
    <property type="nucleotide sequence ID" value="NM_177934.3"/>
</dbReference>
<dbReference type="RefSeq" id="XP_008763971.1">
    <property type="nucleotide sequence ID" value="XM_008765749.4"/>
</dbReference>
<dbReference type="RefSeq" id="XP_017450389.1">
    <property type="nucleotide sequence ID" value="XM_017594900.3"/>
</dbReference>
<dbReference type="RefSeq" id="XP_017450390.1">
    <property type="nucleotide sequence ID" value="XM_017594901.1"/>
</dbReference>
<dbReference type="RefSeq" id="XP_017450391.1">
    <property type="nucleotide sequence ID" value="XM_017594902.1"/>
</dbReference>
<dbReference type="RefSeq" id="XP_038935276.1">
    <property type="nucleotide sequence ID" value="XM_039079348.2"/>
</dbReference>
<dbReference type="SMR" id="Q811Q1"/>
<dbReference type="FunCoup" id="Q811Q1">
    <property type="interactions" value="1192"/>
</dbReference>
<dbReference type="STRING" id="10116.ENSRNOP00000069685"/>
<dbReference type="GlyGen" id="Q811Q1">
    <property type="glycosylation" value="1 site"/>
</dbReference>
<dbReference type="PhosphoSitePlus" id="Q811Q1"/>
<dbReference type="PaxDb" id="10116-ENSRNOP00000052164"/>
<dbReference type="Ensembl" id="ENSRNOT00000082149.2">
    <property type="protein sequence ID" value="ENSRNOP00000069685.1"/>
    <property type="gene ID" value="ENSRNOG00000036842.3"/>
</dbReference>
<dbReference type="GeneID" id="315344"/>
<dbReference type="KEGG" id="rno:315344"/>
<dbReference type="AGR" id="RGD:631403"/>
<dbReference type="CTD" id="23583"/>
<dbReference type="RGD" id="631403">
    <property type="gene designation" value="Smug1"/>
</dbReference>
<dbReference type="eggNOG" id="ENOG502QT20">
    <property type="taxonomic scope" value="Eukaryota"/>
</dbReference>
<dbReference type="GeneTree" id="ENSGT00390000004897"/>
<dbReference type="InParanoid" id="Q811Q1"/>
<dbReference type="OMA" id="VANYCPL"/>
<dbReference type="OrthoDB" id="408702at2759"/>
<dbReference type="PhylomeDB" id="Q811Q1"/>
<dbReference type="TreeFam" id="TF324356"/>
<dbReference type="BRENDA" id="3.2.2.27">
    <property type="organism ID" value="5301"/>
</dbReference>
<dbReference type="Reactome" id="R-RNO-110329">
    <property type="pathway name" value="Cleavage of the damaged pyrimidine"/>
</dbReference>
<dbReference type="Reactome" id="R-RNO-110357">
    <property type="pathway name" value="Displacement of DNA glycosylase by APEX1"/>
</dbReference>
<dbReference type="PRO" id="PR:Q811Q1"/>
<dbReference type="Proteomes" id="UP000002494">
    <property type="component" value="Chromosome 7"/>
</dbReference>
<dbReference type="Bgee" id="ENSRNOG00000036842">
    <property type="expression patterns" value="Expressed in stomach and 19 other cell types or tissues"/>
</dbReference>
<dbReference type="GO" id="GO:0005730">
    <property type="term" value="C:nucleolus"/>
    <property type="evidence" value="ECO:0000250"/>
    <property type="project" value="HGNC-UCL"/>
</dbReference>
<dbReference type="GO" id="GO:0003677">
    <property type="term" value="F:DNA binding"/>
    <property type="evidence" value="ECO:0007669"/>
    <property type="project" value="UniProtKB-KW"/>
</dbReference>
<dbReference type="GO" id="GO:0019104">
    <property type="term" value="F:DNA N-glycosylase activity"/>
    <property type="evidence" value="ECO:0000266"/>
    <property type="project" value="RGD"/>
</dbReference>
<dbReference type="GO" id="GO:0000703">
    <property type="term" value="F:oxidized pyrimidine nucleobase lesion DNA N-glycosylase activity"/>
    <property type="evidence" value="ECO:0000314"/>
    <property type="project" value="RGD"/>
</dbReference>
<dbReference type="GO" id="GO:0017065">
    <property type="term" value="F:single-strand selective uracil DNA N-glycosylase activity"/>
    <property type="evidence" value="ECO:0000314"/>
    <property type="project" value="HGNC-UCL"/>
</dbReference>
<dbReference type="GO" id="GO:0004844">
    <property type="term" value="F:uracil DNA N-glycosylase activity"/>
    <property type="evidence" value="ECO:0000314"/>
    <property type="project" value="HGNC-UCL"/>
</dbReference>
<dbReference type="GO" id="GO:0006284">
    <property type="term" value="P:base-excision repair"/>
    <property type="evidence" value="ECO:0000314"/>
    <property type="project" value="HGNC-UCL"/>
</dbReference>
<dbReference type="GO" id="GO:0006281">
    <property type="term" value="P:DNA repair"/>
    <property type="evidence" value="ECO:0000314"/>
    <property type="project" value="RGD"/>
</dbReference>
<dbReference type="CDD" id="cd19374">
    <property type="entry name" value="UDG-F3_SMUG1-like"/>
    <property type="match status" value="1"/>
</dbReference>
<dbReference type="FunFam" id="3.40.470.10:FF:000005">
    <property type="entry name" value="Single-strand selective monofunctional uracil DNA glycosylase"/>
    <property type="match status" value="1"/>
</dbReference>
<dbReference type="Gene3D" id="3.40.470.10">
    <property type="entry name" value="Uracil-DNA glycosylase-like domain"/>
    <property type="match status" value="1"/>
</dbReference>
<dbReference type="InterPro" id="IPR039134">
    <property type="entry name" value="SMUG1"/>
</dbReference>
<dbReference type="InterPro" id="IPR005122">
    <property type="entry name" value="Uracil-DNA_glycosylase-like"/>
</dbReference>
<dbReference type="InterPro" id="IPR036895">
    <property type="entry name" value="Uracil-DNA_glycosylase-like_sf"/>
</dbReference>
<dbReference type="PANTHER" id="PTHR13235">
    <property type="entry name" value="SINGLE-STRAND SELECTIVE MONOFUNCTIONAL URACIL DNA GLYCOSYLASE"/>
    <property type="match status" value="1"/>
</dbReference>
<dbReference type="PANTHER" id="PTHR13235:SF2">
    <property type="entry name" value="SINGLE-STRAND SELECTIVE MONOFUNCTIONAL URACIL DNA GLYCOSYLASE"/>
    <property type="match status" value="1"/>
</dbReference>
<dbReference type="Pfam" id="PF03167">
    <property type="entry name" value="UDG"/>
    <property type="match status" value="1"/>
</dbReference>
<dbReference type="SUPFAM" id="SSF52141">
    <property type="entry name" value="Uracil-DNA glycosylase-like"/>
    <property type="match status" value="1"/>
</dbReference>
<proteinExistence type="evidence at transcript level"/>
<name>SMUG1_RAT</name>
<accession>Q811Q1</accession>
<comment type="function">
    <text evidence="3">Recognizes base lesions in the genome and initiates base excision DNA repair. Acts as a monofunctional DNA glycosylase specific for uracil (U) residues in DNA with a preference for single-stranded DNA substrates. The activity is greater toward mismatches (U/G) compared to matches (U/A). Excises uracil (U), 5-formyluracil (fU) and uracil derivatives bearing an oxidized group at C5 [5-hydroxyuracil (hoU) and 5-hydroxymethyluracil (hmU)] in ssDNA and dsDNA, but not analogous cytosine derivatives (5-hydroxycytosine and 5-formylcytosine), nor other oxidized bases. The activity is damage-specific and salt-dependent. The substrate preference is the following: ssDNA &gt; dsDNA (G pair) = dsDNA (A pair) at low salt concentration, and dsDNA (G pair) &gt; dsDNA (A pair) &gt; ssDNA at high salt concentration.</text>
</comment>
<comment type="subcellular location">
    <subcellularLocation>
        <location evidence="2">Nucleus</location>
    </subcellularLocation>
</comment>
<comment type="similarity">
    <text>Belongs to the uracil-DNA glycosylase (UDG) superfamily. SMUG1 family.</text>
</comment>
<evidence type="ECO:0000250" key="1"/>
<evidence type="ECO:0000250" key="2">
    <source>
        <dbReference type="UniProtKB" id="Q53HV7"/>
    </source>
</evidence>
<evidence type="ECO:0000269" key="3">
    <source>
    </source>
</evidence>
<sequence length="278" mass="30562">MAVSQTFPPGPAHEPASALMEPCARSLAEGFLEEELRLNAELSQLQFPEPVGVIYNPVDYAWEPHRNYVTRYCQGPKEVLFLGMNPGPFGMAQTGVPFGEVNVVRDWLGIGGSVLSPPQEHPKRPVLGLECPQSEVSGARFWGFFRTLCGQPQVFFRHCFVHNLCPLLFLAPSGRNLTPADLPAKHREQLLSICDAALCRQVQLLGVRLVVGVGRLAEQRARRALAGLTPEVQVEGLLHPSPRSPQANKGWETAARERLQELGLLPLLTDEGSVRPTP</sequence>
<keyword id="KW-0227">DNA damage</keyword>
<keyword id="KW-0234">DNA repair</keyword>
<keyword id="KW-0238">DNA-binding</keyword>
<keyword id="KW-0378">Hydrolase</keyword>
<keyword id="KW-0539">Nucleus</keyword>
<keyword id="KW-1185">Reference proteome</keyword>
<organism>
    <name type="scientific">Rattus norvegicus</name>
    <name type="common">Rat</name>
    <dbReference type="NCBI Taxonomy" id="10116"/>
    <lineage>
        <taxon>Eukaryota</taxon>
        <taxon>Metazoa</taxon>
        <taxon>Chordata</taxon>
        <taxon>Craniata</taxon>
        <taxon>Vertebrata</taxon>
        <taxon>Euteleostomi</taxon>
        <taxon>Mammalia</taxon>
        <taxon>Eutheria</taxon>
        <taxon>Euarchontoglires</taxon>
        <taxon>Glires</taxon>
        <taxon>Rodentia</taxon>
        <taxon>Myomorpha</taxon>
        <taxon>Muroidea</taxon>
        <taxon>Muridae</taxon>
        <taxon>Murinae</taxon>
        <taxon>Rattus</taxon>
    </lineage>
</organism>
<feature type="chain" id="PRO_0000071994" description="Single-strand selective monofunctional uracil-DNA glycosylase">
    <location>
        <begin position="1"/>
        <end position="278"/>
    </location>
</feature>
<feature type="region of interest" description="DNA-binding" evidence="1">
    <location>
        <begin position="173"/>
        <end position="187"/>
    </location>
</feature>
<feature type="binding site" evidence="1">
    <location>
        <position position="84"/>
    </location>
    <ligand>
        <name>substrate</name>
    </ligand>
</feature>
<feature type="binding site" evidence="1">
    <location>
        <position position="98"/>
    </location>
    <ligand>
        <name>substrate</name>
    </ligand>
</feature>
<feature type="binding site" evidence="1">
    <location>
        <position position="163"/>
    </location>
    <ligand>
        <name>substrate</name>
    </ligand>
</feature>
<feature type="binding site" evidence="1">
    <location>
        <position position="239"/>
    </location>
    <ligand>
        <name>substrate</name>
    </ligand>
</feature>